<name>EST4_DROMO</name>
<organism>
    <name type="scientific">Drosophila mojavensis</name>
    <name type="common">Fruit fly</name>
    <dbReference type="NCBI Taxonomy" id="7230"/>
    <lineage>
        <taxon>Eukaryota</taxon>
        <taxon>Metazoa</taxon>
        <taxon>Ecdysozoa</taxon>
        <taxon>Arthropoda</taxon>
        <taxon>Hexapoda</taxon>
        <taxon>Insecta</taxon>
        <taxon>Pterygota</taxon>
        <taxon>Neoptera</taxon>
        <taxon>Endopterygota</taxon>
        <taxon>Diptera</taxon>
        <taxon>Brachycera</taxon>
        <taxon>Muscomorpha</taxon>
        <taxon>Ephydroidea</taxon>
        <taxon>Drosophilidae</taxon>
        <taxon>Drosophila</taxon>
    </lineage>
</organism>
<keyword id="KW-0903">Direct protein sequencing</keyword>
<keyword id="KW-0378">Hydrolase</keyword>
<keyword id="KW-0719">Serine esterase</keyword>
<gene>
    <name type="primary">Est-4</name>
    <name type="synonym">Est4</name>
</gene>
<sequence length="40" mass="4382">APLLVELPNGKLRGRDNEGYYEAELIPKADPPVGDLAFKD</sequence>
<comment type="catalytic activity">
    <reaction evidence="1">
        <text>a carboxylic ester + H2O = an alcohol + a carboxylate + H(+)</text>
        <dbReference type="Rhea" id="RHEA:21164"/>
        <dbReference type="ChEBI" id="CHEBI:15377"/>
        <dbReference type="ChEBI" id="CHEBI:15378"/>
        <dbReference type="ChEBI" id="CHEBI:29067"/>
        <dbReference type="ChEBI" id="CHEBI:30879"/>
        <dbReference type="ChEBI" id="CHEBI:33308"/>
        <dbReference type="EC" id="3.1.1.1"/>
    </reaction>
</comment>
<comment type="similarity">
    <text evidence="2">Belongs to the type-B carboxylesterase/lipase family.</text>
</comment>
<reference key="1">
    <citation type="journal article" date="1986" name="Biochem. J.">
        <title>Structural comparison of two esterases from Drosophila mojavensis isolated by immunoaffinity chromatography.</title>
        <authorList>
            <person name="Pen J."/>
            <person name="van Beeumen J."/>
            <person name="Beintema J.J."/>
        </authorList>
    </citation>
    <scope>PROTEIN SEQUENCE</scope>
</reference>
<protein>
    <recommendedName>
        <fullName>Esterase-4</fullName>
        <ecNumber>3.1.1.1</ecNumber>
    </recommendedName>
</protein>
<accession>P10094</accession>
<evidence type="ECO:0000255" key="1">
    <source>
        <dbReference type="PROSITE-ProRule" id="PRU10039"/>
    </source>
</evidence>
<evidence type="ECO:0000305" key="2"/>
<feature type="chain" id="PRO_0000070274" description="Esterase-4">
    <location>
        <begin position="1"/>
        <end position="40" status="greater than"/>
    </location>
</feature>
<feature type="non-terminal residue">
    <location>
        <position position="40"/>
    </location>
</feature>
<proteinExistence type="evidence at protein level"/>
<dbReference type="EC" id="3.1.1.1"/>
<dbReference type="PIR" id="A29502">
    <property type="entry name" value="A29502"/>
</dbReference>
<dbReference type="SMR" id="P10094"/>
<dbReference type="GO" id="GO:0106435">
    <property type="term" value="F:carboxylesterase activity"/>
    <property type="evidence" value="ECO:0007669"/>
    <property type="project" value="UniProtKB-EC"/>
</dbReference>